<reference key="1">
    <citation type="journal article" date="1990" name="Virology">
        <title>Active hepatitis B virus replication in the presence of anti-HBe is associated with viral variants containing an inactive pre-C region.</title>
        <authorList>
            <person name="Tong S."/>
            <person name="Li J."/>
            <person name="Vitvitski L."/>
            <person name="Trepo C."/>
        </authorList>
    </citation>
    <scope>NUCLEOTIDE SEQUENCE [GENOMIC DNA]</scope>
</reference>
<reference key="2">
    <citation type="journal article" date="1996" name="Intervirology">
        <title>Functions of the large hepatitis B virus surface protein in viral particle morphogenesis.</title>
        <authorList>
            <person name="Bruss V."/>
            <person name="Gerhardt E."/>
            <person name="Vieluf K."/>
            <person name="Wunderlich G."/>
        </authorList>
    </citation>
    <scope>REVIEW</scope>
</reference>
<reference key="3">
    <citation type="journal article" date="1998" name="Adv. Exp. Med. Biol.">
        <title>Role of glycan processing in hepatitis B virus envelope protein trafficking.</title>
        <authorList>
            <person name="Block T.M."/>
            <person name="Lu X."/>
            <person name="Mehta A."/>
            <person name="Park J."/>
            <person name="Blumberg B.S."/>
            <person name="Dwek R."/>
        </authorList>
    </citation>
    <scope>REVIEW</scope>
</reference>
<reference key="4">
    <citation type="journal article" date="2004" name="Virus Res.">
        <title>Envelopment of the hepatitis B virus nucleocapsid.</title>
        <authorList>
            <person name="Bruss V."/>
        </authorList>
    </citation>
    <scope>REVIEW</scope>
</reference>
<reference key="5">
    <citation type="journal article" date="2006" name="Cancer Sci.">
        <title>Hepatitis B virus pre-S mutants, endoplasmic reticulum stress and hepatocarcinogenesis.</title>
        <authorList>
            <person name="Wang H.C."/>
            <person name="Huang W."/>
            <person name="Lai M.D."/>
            <person name="Su I.J."/>
        </authorList>
    </citation>
    <scope>REVIEW</scope>
</reference>
<sequence>MGQNLSTSNPLGFFPDHQLDPAFRANTANPDWDFNPNKDSWPDANKVGAGAFGLGFTPPHGGLLGWSPQAQGILQTLPANPPPASTNRQSGRQPTPLSPPLRNTHPQAMQWNSTTFHQTLQDPRVRGLYLPAGGSSSGTVNPVPTTVSPISSIFSRIGDPALNMENITSGFLGPLLVLQAGFFLLTKILTIPKSLDSWWTSLNFLGGTTVCLGQNSQSPTSNHSPTSCPPTCPGYRWMCLRRFIIFLFILLLCLIFLLVLLDYQGMLPVCPLIPGSSTTSTGPCRTCTTPAQGTSMYPSCCCTKPSDGNCTCIPIPSSWAFGKFLWEWASARFSWLSLLVPFVQWFVGLSPTVWLLVIWMMWYWGPKLFTILSPFLPLLPIFFCLWVYI</sequence>
<organismHost>
    <name type="scientific">Homo sapiens</name>
    <name type="common">Human</name>
    <dbReference type="NCBI Taxonomy" id="9606"/>
</organismHost>
<organismHost>
    <name type="scientific">Pan troglodytes</name>
    <name type="common">Chimpanzee</name>
    <dbReference type="NCBI Taxonomy" id="9598"/>
</organismHost>
<proteinExistence type="evidence at protein level"/>
<dbReference type="EMBL" id="M32138">
    <property type="protein sequence ID" value="AAA45502.1"/>
    <property type="molecule type" value="Genomic_DNA"/>
</dbReference>
<dbReference type="PIR" id="B34773">
    <property type="entry name" value="SAVLA1"/>
</dbReference>
<dbReference type="SMR" id="P24025"/>
<dbReference type="GlyCosmos" id="P24025">
    <property type="glycosylation" value="1 site, No reported glycans"/>
</dbReference>
<dbReference type="Proteomes" id="UP000007929">
    <property type="component" value="Segment"/>
</dbReference>
<dbReference type="GO" id="GO:0016020">
    <property type="term" value="C:membrane"/>
    <property type="evidence" value="ECO:0007669"/>
    <property type="project" value="UniProtKB-UniRule"/>
</dbReference>
<dbReference type="GO" id="GO:0019031">
    <property type="term" value="C:viral envelope"/>
    <property type="evidence" value="ECO:0007669"/>
    <property type="project" value="UniProtKB-KW"/>
</dbReference>
<dbReference type="GO" id="GO:0055036">
    <property type="term" value="C:virion membrane"/>
    <property type="evidence" value="ECO:0007669"/>
    <property type="project" value="UniProtKB-SubCell"/>
</dbReference>
<dbReference type="GO" id="GO:0075513">
    <property type="term" value="P:caveolin-mediated endocytosis of virus by host cell"/>
    <property type="evidence" value="ECO:0007669"/>
    <property type="project" value="UniProtKB-KW"/>
</dbReference>
<dbReference type="GO" id="GO:0039654">
    <property type="term" value="P:fusion of virus membrane with host endosome membrane"/>
    <property type="evidence" value="ECO:0007669"/>
    <property type="project" value="UniProtKB-KW"/>
</dbReference>
<dbReference type="GO" id="GO:0019062">
    <property type="term" value="P:virion attachment to host cell"/>
    <property type="evidence" value="ECO:0007669"/>
    <property type="project" value="UniProtKB-UniRule"/>
</dbReference>
<dbReference type="HAMAP" id="MF_04075">
    <property type="entry name" value="HBV_HBSAG"/>
    <property type="match status" value="1"/>
</dbReference>
<dbReference type="InterPro" id="IPR000349">
    <property type="entry name" value="HBV_HBSAG"/>
</dbReference>
<dbReference type="Pfam" id="PF00695">
    <property type="entry name" value="vMSA"/>
    <property type="match status" value="1"/>
</dbReference>
<name>HBSAG_HBVD2</name>
<organism>
    <name type="scientific">Hepatitis B virus genotype D (isolate France/alpha1/1989)</name>
    <name type="common">HBV-D</name>
    <dbReference type="NCBI Taxonomy" id="10411"/>
    <lineage>
        <taxon>Viruses</taxon>
        <taxon>Riboviria</taxon>
        <taxon>Pararnavirae</taxon>
        <taxon>Artverviricota</taxon>
        <taxon>Revtraviricetes</taxon>
        <taxon>Blubervirales</taxon>
        <taxon>Hepadnaviridae</taxon>
        <taxon>Orthohepadnavirus</taxon>
        <taxon>Hepatitis B virus</taxon>
    </lineage>
</organism>
<evidence type="ECO:0000250" key="1">
    <source>
        <dbReference type="UniProtKB" id="P03138"/>
    </source>
</evidence>
<evidence type="ECO:0000250" key="2">
    <source>
        <dbReference type="UniProtKB" id="P03141"/>
    </source>
</evidence>
<evidence type="ECO:0000255" key="3">
    <source>
        <dbReference type="HAMAP-Rule" id="MF_04075"/>
    </source>
</evidence>
<evidence type="ECO:0000256" key="4">
    <source>
        <dbReference type="SAM" id="MobiDB-lite"/>
    </source>
</evidence>
<evidence type="ECO:0000305" key="5"/>
<gene>
    <name evidence="3" type="primary">S</name>
</gene>
<keyword id="KW-0007">Acetylation</keyword>
<keyword id="KW-0024">Alternative initiation</keyword>
<keyword id="KW-0025">Alternative splicing</keyword>
<keyword id="KW-1166">Caveolin-mediated endocytosis of virus by host</keyword>
<keyword id="KW-1170">Fusion of virus membrane with host endosomal membrane</keyword>
<keyword id="KW-1168">Fusion of virus membrane with host membrane</keyword>
<keyword id="KW-0325">Glycoprotein</keyword>
<keyword id="KW-0945">Host-virus interaction</keyword>
<keyword id="KW-0449">Lipoprotein</keyword>
<keyword id="KW-0472">Membrane</keyword>
<keyword id="KW-0519">Myristate</keyword>
<keyword id="KW-0812">Transmembrane</keyword>
<keyword id="KW-1133">Transmembrane helix</keyword>
<keyword id="KW-1161">Viral attachment to host cell</keyword>
<keyword id="KW-0261">Viral envelope protein</keyword>
<keyword id="KW-1162">Viral penetration into host cytoplasm</keyword>
<keyword id="KW-0946">Virion</keyword>
<keyword id="KW-1164">Virus endocytosis by host</keyword>
<keyword id="KW-1160">Virus entry into host cell</keyword>
<feature type="initiator methionine" description="Removed; by host" evidence="3">
    <location>
        <position position="1"/>
    </location>
</feature>
<feature type="chain" id="PRO_0000038091" description="Large envelope protein" evidence="3">
    <location>
        <begin position="2"/>
        <end position="389"/>
    </location>
</feature>
<feature type="topological domain" description="Intravirion; in internal conformation" evidence="3">
    <location>
        <begin position="2"/>
        <end position="242"/>
    </location>
</feature>
<feature type="topological domain" description="Virion surface; in external conformation" evidence="3">
    <location>
        <begin position="2"/>
        <end position="170"/>
    </location>
</feature>
<feature type="transmembrane region" description="Helical; Name=TM1; Note=In external conformation" evidence="3">
    <location>
        <begin position="171"/>
        <end position="191"/>
    </location>
</feature>
<feature type="topological domain" description="Intravirion; in external conformation" evidence="3">
    <location>
        <begin position="192"/>
        <end position="242"/>
    </location>
</feature>
<feature type="transmembrane region" description="Helical; Name=TM2" evidence="3">
    <location>
        <begin position="243"/>
        <end position="263"/>
    </location>
</feature>
<feature type="topological domain" description="Virion surface" evidence="3">
    <location>
        <begin position="264"/>
        <end position="337"/>
    </location>
</feature>
<feature type="transmembrane region" description="Helical" evidence="3">
    <location>
        <begin position="338"/>
        <end position="358"/>
    </location>
</feature>
<feature type="topological domain" description="Intravirion" evidence="3">
    <location>
        <begin position="359"/>
        <end position="364"/>
    </location>
</feature>
<feature type="transmembrane region" description="Helical; Name=TM3" evidence="3">
    <location>
        <begin position="365"/>
        <end position="387"/>
    </location>
</feature>
<feature type="topological domain" description="Virion surface" evidence="3">
    <location>
        <begin position="388"/>
        <end position="389"/>
    </location>
</feature>
<feature type="region of interest" description="Pre-S" evidence="3">
    <location>
        <begin position="2"/>
        <end position="163"/>
    </location>
</feature>
<feature type="region of interest" description="Pre-S1" evidence="3">
    <location>
        <begin position="2"/>
        <end position="108"/>
    </location>
</feature>
<feature type="region of interest" description="Disordered" evidence="4">
    <location>
        <begin position="76"/>
        <end position="103"/>
    </location>
</feature>
<feature type="region of interest" description="Pre-S2" evidence="3">
    <location>
        <begin position="109"/>
        <end position="163"/>
    </location>
</feature>
<feature type="compositionally biased region" description="Polar residues" evidence="4">
    <location>
        <begin position="85"/>
        <end position="95"/>
    </location>
</feature>
<feature type="lipid moiety-binding region" description="N-myristoyl glycine; by host" evidence="3">
    <location>
        <position position="2"/>
    </location>
</feature>
<feature type="glycosylation site" description="N-linked (GlcNAc...) asparagine; by host" evidence="3">
    <location>
        <position position="309"/>
    </location>
</feature>
<feature type="splice variant" id="VSP_031402" description="In isoform S." evidence="5">
    <location>
        <begin position="1"/>
        <end position="163"/>
    </location>
</feature>
<feature type="splice variant" id="VSP_031403" description="In isoform M." evidence="5">
    <location>
        <begin position="1"/>
        <end position="108"/>
    </location>
</feature>
<feature type="modified residue" description="N-acetylmethionine" evidence="1">
    <location sequence="P24025-2">
        <position position="1"/>
    </location>
</feature>
<protein>
    <recommendedName>
        <fullName evidence="3">Large envelope protein</fullName>
    </recommendedName>
    <alternativeName>
        <fullName evidence="3">L glycoprotein</fullName>
    </alternativeName>
    <alternativeName>
        <fullName evidence="3">L-HBsAg</fullName>
        <shortName evidence="3">LHB</shortName>
    </alternativeName>
    <alternativeName>
        <fullName evidence="3">Large S protein</fullName>
    </alternativeName>
    <alternativeName>
        <fullName evidence="3">Large surface protein</fullName>
    </alternativeName>
    <alternativeName>
        <fullName evidence="3">Major surface antigen</fullName>
    </alternativeName>
</protein>
<comment type="function">
    <text evidence="3">The large envelope protein exists in two topological conformations, one which is termed 'external' or Le-HBsAg and the other 'internal' or Li-HBsAg. In its external conformation the protein attaches the virus to cell receptors and thereby initiating infection. This interaction determines the species specificity and liver tropism. This attachment induces virion internalization predominantly through caveolin-mediated endocytosis. The large envelope protein also assures fusion between virion membrane and endosomal membrane. In its internal conformation the protein plays a role in virion morphogenesis and mediates the contact with the nucleocapsid like a matrix protein.</text>
</comment>
<comment type="function">
    <text evidence="3">The middle envelope protein plays an important role in the budding of the virion. It is involved in the induction of budding in a nucleocapsid independent way. In this process the majority of envelope proteins bud to form subviral lipoprotein particles of 22 nm of diameter that do not contain a nucleocapsid.</text>
</comment>
<comment type="subunit">
    <molecule>Isoform L</molecule>
    <text evidence="2">In its internal form (Li-HBsAg), interacts with the capsid protein and with the isoform S. Interacts with host chaperone CANX.</text>
</comment>
<comment type="subunit">
    <molecule>Isoform M</molecule>
    <text evidence="2">Associates with host chaperone CANX through its pre-S2 N glycan; this association may be essential for isoform M proper secretion.</text>
</comment>
<comment type="subunit">
    <molecule>Isoform S</molecule>
    <text evidence="2">Interacts with isoform L. Interacts with the antigens of satellite virus HDV (HDVAgs); this interaction is required for encapsidation of HDV genomic RNA.</text>
</comment>
<comment type="subcellular location">
    <subcellularLocation>
        <location evidence="3">Virion membrane</location>
    </subcellularLocation>
</comment>
<comment type="alternative products">
    <event type="alternative splicing"/>
    <event type="alternative initiation"/>
    <isoform>
        <id>P24025-1</id>
        <name>L</name>
        <name>Large envelope protein</name>
        <name>LHB</name>
        <name>L-HBsAg</name>
        <sequence type="displayed"/>
    </isoform>
    <isoform>
        <id>P24025-2</id>
        <name>M</name>
        <name>Middle envelope protein</name>
        <name>MHB</name>
        <name>M-HBsAg</name>
        <sequence type="described" ref="VSP_031403"/>
    </isoform>
    <isoform>
        <id>P24025-3</id>
        <name>S</name>
        <name>Small envelope protein</name>
        <name>SHB</name>
        <name>S-HBsAg</name>
        <sequence type="described" ref="VSP_031402"/>
    </isoform>
</comment>
<comment type="domain">
    <text evidence="3">The large envelope protein is synthesized with the pre-S region at the cytosolic side of the endoplasmic reticulum and, hence will be within the virion after budding. Therefore the pre-S region is not N-glycosylated. Later a post-translational translocation of N-terminal pre-S and TM1 domains occur in about 50% of proteins at the virion surface. These molecules change their topology by an unknown mechanism, resulting in exposure of pre-S region at virion surface. For isoform M in contrast, the pre-S2 region is translocated cotranslationally to the endoplasmic reticulum lumen and is N-glycosylated.</text>
</comment>
<comment type="PTM">
    <text evidence="1 3">Isoform M is N-terminally acetylated by host at a ratio of 90%, and N-glycosylated by host at the pre-S2 region.</text>
</comment>
<comment type="PTM">
    <text evidence="3">Myristoylated.</text>
</comment>
<comment type="biotechnology">
    <text>Systematic vaccination of individuals at risk of exposure to the virus has been the main method of controlling the morbidity and mortality associated with hepatitis B. The first hepatitis B vaccine was manufactured by the purification and inactivation of HBsAg obtained from the plasma of chronic hepatitis B virus carriers. The vaccine is now produced by recombinant DNA techniques and expression of the S isoform in yeast cells. The pre-S region do not seem to induce strong enough antigenic response.</text>
</comment>
<comment type="similarity">
    <text evidence="3">Belongs to the orthohepadnavirus major surface antigen family.</text>
</comment>
<accession>P24025</accession>